<reference key="1">
    <citation type="journal article" date="2003" name="Nucleic Acids Res.">
        <title>The complete genome sequence and analysis of Corynebacterium diphtheriae NCTC13129.</title>
        <authorList>
            <person name="Cerdeno-Tarraga A.-M."/>
            <person name="Efstratiou A."/>
            <person name="Dover L.G."/>
            <person name="Holden M.T.G."/>
            <person name="Pallen M.J."/>
            <person name="Bentley S.D."/>
            <person name="Besra G.S."/>
            <person name="Churcher C.M."/>
            <person name="James K.D."/>
            <person name="De Zoysa A."/>
            <person name="Chillingworth T."/>
            <person name="Cronin A."/>
            <person name="Dowd L."/>
            <person name="Feltwell T."/>
            <person name="Hamlin N."/>
            <person name="Holroyd S."/>
            <person name="Jagels K."/>
            <person name="Moule S."/>
            <person name="Quail M.A."/>
            <person name="Rabbinowitsch E."/>
            <person name="Rutherford K.M."/>
            <person name="Thomson N.R."/>
            <person name="Unwin L."/>
            <person name="Whitehead S."/>
            <person name="Barrell B.G."/>
            <person name="Parkhill J."/>
        </authorList>
    </citation>
    <scope>NUCLEOTIDE SEQUENCE [LARGE SCALE GENOMIC DNA]</scope>
    <source>
        <strain>ATCC 700971 / NCTC 13129 / Biotype gravis</strain>
    </source>
</reference>
<protein>
    <recommendedName>
        <fullName evidence="1">UvrABC system protein B</fullName>
        <shortName evidence="1">Protein UvrB</shortName>
    </recommendedName>
    <alternativeName>
        <fullName evidence="1">Excinuclease ABC subunit B</fullName>
    </alternativeName>
</protein>
<gene>
    <name evidence="1" type="primary">uvrB</name>
    <name type="ordered locus">DIP1154</name>
</gene>
<sequence length="681" mass="77076">MGDIERTDARFEVISEYEPAGDQPAAIEELDARLSRGERDVVLLGATGTGKSATAAWLIEQQQRPTLVMAPNKTLAAQLANELRQLLPNNAVEYFVSYYDYYQPEAYIAQTDTYIEKDSSINDDVERLRHRATSSLLSRRDVVVVSSVSCIYGLGTPQSYLDRSVVLRVDEEVERDRFLRLLVDIQYDRNDVGFTRGTFRVKGDTVDIIPAYEEVAVRVEFFGDDIDALYYIHPLTGDVIRQVDEVRIFPATHYVAGPERMAKAVEDIKAELRDRLEDLENRGKLLEAQRLRMRTEYDLEMIEQVGFCSGIENYSRHLDGRPAGSAPATLLDYFPEDFLTIIDESHVTVPQIGGMFEGDMSRKRNLVEFGFRLPSALDNRPLKWEEFEQRVGQTVYMSATPGDYELAASGGEYVEQVIRPTGLVDPEIDVRPTRGQIDDLIHEIKQRTTKDERVLVTTLTKKMAEDLTDYLLENGIRVRYLHSDIDTLQRVELLRQLRLGEYDVLVGINLLREGLDLPEVSLVAILDADKEGFLRSTKSLIQTIGRAARNVSGTVIMYADKITDSMQYAIDETERRREKQIAYNKEHGIDPQPLRKKIADILEQVQESKAESTAPSSDAVVVSKTNTSSMPVAELRSLIDDLTTQMGTAARELKFELAGRLRDEIAELKKELRGMEEIGLA</sequence>
<organism>
    <name type="scientific">Corynebacterium diphtheriae (strain ATCC 700971 / NCTC 13129 / Biotype gravis)</name>
    <dbReference type="NCBI Taxonomy" id="257309"/>
    <lineage>
        <taxon>Bacteria</taxon>
        <taxon>Bacillati</taxon>
        <taxon>Actinomycetota</taxon>
        <taxon>Actinomycetes</taxon>
        <taxon>Mycobacteriales</taxon>
        <taxon>Corynebacteriaceae</taxon>
        <taxon>Corynebacterium</taxon>
    </lineage>
</organism>
<comment type="function">
    <text evidence="1">The UvrABC repair system catalyzes the recognition and processing of DNA lesions. A damage recognition complex composed of 2 UvrA and 2 UvrB subunits scans DNA for abnormalities. Upon binding of the UvrA(2)B(2) complex to a putative damaged site, the DNA wraps around one UvrB monomer. DNA wrap is dependent on ATP binding by UvrB and probably causes local melting of the DNA helix, facilitating insertion of UvrB beta-hairpin between the DNA strands. Then UvrB probes one DNA strand for the presence of a lesion. If a lesion is found the UvrA subunits dissociate and the UvrB-DNA preincision complex is formed. This complex is subsequently bound by UvrC and the second UvrB is released. If no lesion is found, the DNA wraps around the other UvrB subunit that will check the other stand for damage.</text>
</comment>
<comment type="subunit">
    <text evidence="1">Forms a heterotetramer with UvrA during the search for lesions. Interacts with UvrC in an incision complex.</text>
</comment>
<comment type="subcellular location">
    <subcellularLocation>
        <location evidence="1">Cytoplasm</location>
    </subcellularLocation>
</comment>
<comment type="domain">
    <text evidence="1">The beta-hairpin motif is involved in DNA binding.</text>
</comment>
<comment type="similarity">
    <text evidence="1">Belongs to the UvrB family.</text>
</comment>
<dbReference type="EMBL" id="BX248357">
    <property type="protein sequence ID" value="CAE49674.1"/>
    <property type="molecule type" value="Genomic_DNA"/>
</dbReference>
<dbReference type="SMR" id="Q6NHI3"/>
<dbReference type="STRING" id="257309.DIP1154"/>
<dbReference type="KEGG" id="cdi:DIP1154"/>
<dbReference type="HOGENOM" id="CLU_009621_2_1_11"/>
<dbReference type="Proteomes" id="UP000002198">
    <property type="component" value="Chromosome"/>
</dbReference>
<dbReference type="GO" id="GO:0005737">
    <property type="term" value="C:cytoplasm"/>
    <property type="evidence" value="ECO:0007669"/>
    <property type="project" value="UniProtKB-SubCell"/>
</dbReference>
<dbReference type="GO" id="GO:0009380">
    <property type="term" value="C:excinuclease repair complex"/>
    <property type="evidence" value="ECO:0007669"/>
    <property type="project" value="InterPro"/>
</dbReference>
<dbReference type="GO" id="GO:0005524">
    <property type="term" value="F:ATP binding"/>
    <property type="evidence" value="ECO:0007669"/>
    <property type="project" value="UniProtKB-UniRule"/>
</dbReference>
<dbReference type="GO" id="GO:0016887">
    <property type="term" value="F:ATP hydrolysis activity"/>
    <property type="evidence" value="ECO:0007669"/>
    <property type="project" value="InterPro"/>
</dbReference>
<dbReference type="GO" id="GO:0003677">
    <property type="term" value="F:DNA binding"/>
    <property type="evidence" value="ECO:0007669"/>
    <property type="project" value="UniProtKB-UniRule"/>
</dbReference>
<dbReference type="GO" id="GO:0009381">
    <property type="term" value="F:excinuclease ABC activity"/>
    <property type="evidence" value="ECO:0007669"/>
    <property type="project" value="UniProtKB-UniRule"/>
</dbReference>
<dbReference type="GO" id="GO:0006289">
    <property type="term" value="P:nucleotide-excision repair"/>
    <property type="evidence" value="ECO:0007669"/>
    <property type="project" value="UniProtKB-UniRule"/>
</dbReference>
<dbReference type="GO" id="GO:0009432">
    <property type="term" value="P:SOS response"/>
    <property type="evidence" value="ECO:0007669"/>
    <property type="project" value="UniProtKB-UniRule"/>
</dbReference>
<dbReference type="CDD" id="cd17916">
    <property type="entry name" value="DEXHc_UvrB"/>
    <property type="match status" value="1"/>
</dbReference>
<dbReference type="CDD" id="cd18790">
    <property type="entry name" value="SF2_C_UvrB"/>
    <property type="match status" value="1"/>
</dbReference>
<dbReference type="FunFam" id="3.40.50.300:FF:000257">
    <property type="entry name" value="UvrABC system protein B"/>
    <property type="match status" value="1"/>
</dbReference>
<dbReference type="FunFam" id="3.40.50.300:FF:000477">
    <property type="entry name" value="UvrABC system protein B"/>
    <property type="match status" value="1"/>
</dbReference>
<dbReference type="FunFam" id="4.10.860.10:FF:000009">
    <property type="entry name" value="UvrABC system protein B"/>
    <property type="match status" value="1"/>
</dbReference>
<dbReference type="Gene3D" id="3.40.50.300">
    <property type="entry name" value="P-loop containing nucleotide triphosphate hydrolases"/>
    <property type="match status" value="3"/>
</dbReference>
<dbReference type="Gene3D" id="4.10.860.10">
    <property type="entry name" value="UVR domain"/>
    <property type="match status" value="1"/>
</dbReference>
<dbReference type="HAMAP" id="MF_00204">
    <property type="entry name" value="UvrB"/>
    <property type="match status" value="1"/>
</dbReference>
<dbReference type="InterPro" id="IPR006935">
    <property type="entry name" value="Helicase/UvrB_N"/>
</dbReference>
<dbReference type="InterPro" id="IPR014001">
    <property type="entry name" value="Helicase_ATP-bd"/>
</dbReference>
<dbReference type="InterPro" id="IPR001650">
    <property type="entry name" value="Helicase_C-like"/>
</dbReference>
<dbReference type="InterPro" id="IPR027417">
    <property type="entry name" value="P-loop_NTPase"/>
</dbReference>
<dbReference type="InterPro" id="IPR001943">
    <property type="entry name" value="UVR_dom"/>
</dbReference>
<dbReference type="InterPro" id="IPR036876">
    <property type="entry name" value="UVR_dom_sf"/>
</dbReference>
<dbReference type="InterPro" id="IPR004807">
    <property type="entry name" value="UvrB"/>
</dbReference>
<dbReference type="InterPro" id="IPR041471">
    <property type="entry name" value="UvrB_inter"/>
</dbReference>
<dbReference type="InterPro" id="IPR024759">
    <property type="entry name" value="UvrB_YAD/RRR_dom"/>
</dbReference>
<dbReference type="NCBIfam" id="NF003673">
    <property type="entry name" value="PRK05298.1"/>
    <property type="match status" value="1"/>
</dbReference>
<dbReference type="NCBIfam" id="TIGR00631">
    <property type="entry name" value="uvrb"/>
    <property type="match status" value="1"/>
</dbReference>
<dbReference type="PANTHER" id="PTHR24029">
    <property type="entry name" value="UVRABC SYSTEM PROTEIN B"/>
    <property type="match status" value="1"/>
</dbReference>
<dbReference type="PANTHER" id="PTHR24029:SF0">
    <property type="entry name" value="UVRABC SYSTEM PROTEIN B"/>
    <property type="match status" value="1"/>
</dbReference>
<dbReference type="Pfam" id="PF00271">
    <property type="entry name" value="Helicase_C"/>
    <property type="match status" value="1"/>
</dbReference>
<dbReference type="Pfam" id="PF04851">
    <property type="entry name" value="ResIII"/>
    <property type="match status" value="1"/>
</dbReference>
<dbReference type="Pfam" id="PF02151">
    <property type="entry name" value="UVR"/>
    <property type="match status" value="1"/>
</dbReference>
<dbReference type="Pfam" id="PF12344">
    <property type="entry name" value="UvrB"/>
    <property type="match status" value="1"/>
</dbReference>
<dbReference type="Pfam" id="PF17757">
    <property type="entry name" value="UvrB_inter"/>
    <property type="match status" value="1"/>
</dbReference>
<dbReference type="SMART" id="SM00487">
    <property type="entry name" value="DEXDc"/>
    <property type="match status" value="1"/>
</dbReference>
<dbReference type="SMART" id="SM00490">
    <property type="entry name" value="HELICc"/>
    <property type="match status" value="1"/>
</dbReference>
<dbReference type="SUPFAM" id="SSF46600">
    <property type="entry name" value="C-terminal UvrC-binding domain of UvrB"/>
    <property type="match status" value="1"/>
</dbReference>
<dbReference type="SUPFAM" id="SSF52540">
    <property type="entry name" value="P-loop containing nucleoside triphosphate hydrolases"/>
    <property type="match status" value="2"/>
</dbReference>
<dbReference type="PROSITE" id="PS51192">
    <property type="entry name" value="HELICASE_ATP_BIND_1"/>
    <property type="match status" value="1"/>
</dbReference>
<dbReference type="PROSITE" id="PS51194">
    <property type="entry name" value="HELICASE_CTER"/>
    <property type="match status" value="1"/>
</dbReference>
<dbReference type="PROSITE" id="PS50151">
    <property type="entry name" value="UVR"/>
    <property type="match status" value="1"/>
</dbReference>
<accession>Q6NHI3</accession>
<feature type="chain" id="PRO_0000227305" description="UvrABC system protein B">
    <location>
        <begin position="1"/>
        <end position="681"/>
    </location>
</feature>
<feature type="domain" description="Helicase ATP-binding" evidence="1">
    <location>
        <begin position="32"/>
        <end position="419"/>
    </location>
</feature>
<feature type="domain" description="Helicase C-terminal" evidence="1">
    <location>
        <begin position="436"/>
        <end position="602"/>
    </location>
</feature>
<feature type="domain" description="UVR" evidence="1">
    <location>
        <begin position="636"/>
        <end position="671"/>
    </location>
</feature>
<feature type="region of interest" description="Disordered" evidence="2">
    <location>
        <begin position="607"/>
        <end position="626"/>
    </location>
</feature>
<feature type="short sequence motif" description="Beta-hairpin">
    <location>
        <begin position="98"/>
        <end position="121"/>
    </location>
</feature>
<feature type="compositionally biased region" description="Polar residues" evidence="2">
    <location>
        <begin position="607"/>
        <end position="616"/>
    </location>
</feature>
<feature type="binding site" evidence="1">
    <location>
        <begin position="45"/>
        <end position="52"/>
    </location>
    <ligand>
        <name>ATP</name>
        <dbReference type="ChEBI" id="CHEBI:30616"/>
    </ligand>
</feature>
<name>UVRB_CORDI</name>
<evidence type="ECO:0000255" key="1">
    <source>
        <dbReference type="HAMAP-Rule" id="MF_00204"/>
    </source>
</evidence>
<evidence type="ECO:0000256" key="2">
    <source>
        <dbReference type="SAM" id="MobiDB-lite"/>
    </source>
</evidence>
<keyword id="KW-0067">ATP-binding</keyword>
<keyword id="KW-0963">Cytoplasm</keyword>
<keyword id="KW-0227">DNA damage</keyword>
<keyword id="KW-0228">DNA excision</keyword>
<keyword id="KW-0234">DNA repair</keyword>
<keyword id="KW-0267">Excision nuclease</keyword>
<keyword id="KW-0547">Nucleotide-binding</keyword>
<keyword id="KW-1185">Reference proteome</keyword>
<keyword id="KW-0742">SOS response</keyword>
<proteinExistence type="inferred from homology"/>